<evidence type="ECO:0000250" key="1">
    <source>
        <dbReference type="UniProtKB" id="P33535"/>
    </source>
</evidence>
<evidence type="ECO:0000250" key="2">
    <source>
        <dbReference type="UniProtKB" id="P35372"/>
    </source>
</evidence>
<evidence type="ECO:0000250" key="3">
    <source>
        <dbReference type="UniProtKB" id="P42866"/>
    </source>
</evidence>
<evidence type="ECO:0000250" key="4">
    <source>
        <dbReference type="UniProtKB" id="P97266"/>
    </source>
</evidence>
<evidence type="ECO:0000255" key="5"/>
<evidence type="ECO:0000255" key="6">
    <source>
        <dbReference type="PROSITE-ProRule" id="PRU00521"/>
    </source>
</evidence>
<evidence type="ECO:0000256" key="7">
    <source>
        <dbReference type="SAM" id="MobiDB-lite"/>
    </source>
</evidence>
<evidence type="ECO:0000269" key="8">
    <source>
    </source>
</evidence>
<keyword id="KW-1003">Cell membrane</keyword>
<keyword id="KW-0966">Cell projection</keyword>
<keyword id="KW-1015">Disulfide bond</keyword>
<keyword id="KW-0967">Endosome</keyword>
<keyword id="KW-0297">G-protein coupled receptor</keyword>
<keyword id="KW-0325">Glycoprotein</keyword>
<keyword id="KW-0449">Lipoprotein</keyword>
<keyword id="KW-0472">Membrane</keyword>
<keyword id="KW-0564">Palmitate</keyword>
<keyword id="KW-0597">Phosphoprotein</keyword>
<keyword id="KW-0675">Receptor</keyword>
<keyword id="KW-1185">Reference proteome</keyword>
<keyword id="KW-0807">Transducer</keyword>
<keyword id="KW-0812">Transmembrane</keyword>
<keyword id="KW-1133">Transmembrane helix</keyword>
<keyword id="KW-0832">Ubl conjugation</keyword>
<sequence>MDSGAVPTNASNCTDPFTHPSSCSPAPSPSSWVNFSHLEGNLSDPCGPNRTELGGSDRLCPSAGSPSMITAIIIMALYSIVCVVGLFGNFLVMYVIVRYTKMKTATNIYIFNLALADALATSTLPFQSVNYLMGTWPFGTILCKIVISIDYYNMFTSIFTLCTMSVDRYIAVCHPVKALDLRTPRNAKIINICNWILSSAIGLPVMFMATTKYRQGSIDCTLTFSHPTWYWENLLKICVFIFAFIMPILIITVCYGLMILRLKSVRMLSGSKEKDRNLRRITRMVLVVVAVFIVCWTPIHIYVIIKALITIPETTFQTVSWHFCIALGYTNSCLNPVLYAFLDENFKRCFREFCIPTSSTIEQQNSTRIRQNTRDHPSTANTVDRTNHQLENLEAETTPLP</sequence>
<protein>
    <recommendedName>
        <fullName>Mu-type opioid receptor</fullName>
        <shortName>M-OR-1</shortName>
        <shortName>MOR-1</shortName>
    </recommendedName>
</protein>
<name>OPRM_BOVIN</name>
<feature type="chain" id="PRO_0000069970" description="Mu-type opioid receptor">
    <location>
        <begin position="1"/>
        <end position="401"/>
    </location>
</feature>
<feature type="topological domain" description="Extracellular" evidence="3">
    <location>
        <begin position="1"/>
        <end position="69"/>
    </location>
</feature>
<feature type="transmembrane region" description="Helical; Name=1" evidence="3">
    <location>
        <begin position="70"/>
        <end position="94"/>
    </location>
</feature>
<feature type="topological domain" description="Cytoplasmic" evidence="3">
    <location>
        <begin position="95"/>
        <end position="107"/>
    </location>
</feature>
<feature type="transmembrane region" description="Helical; Name=2" evidence="3">
    <location>
        <begin position="108"/>
        <end position="132"/>
    </location>
</feature>
<feature type="topological domain" description="Extracellular" evidence="3">
    <location>
        <begin position="133"/>
        <end position="143"/>
    </location>
</feature>
<feature type="transmembrane region" description="Helical; Name=3" evidence="3">
    <location>
        <begin position="144"/>
        <end position="166"/>
    </location>
</feature>
<feature type="topological domain" description="Cytoplasmic" evidence="3">
    <location>
        <begin position="167"/>
        <end position="186"/>
    </location>
</feature>
<feature type="transmembrane region" description="Helical; Name=4" evidence="3">
    <location>
        <begin position="187"/>
        <end position="208"/>
    </location>
</feature>
<feature type="topological domain" description="Extracellular" evidence="3">
    <location>
        <begin position="209"/>
        <end position="231"/>
    </location>
</feature>
<feature type="transmembrane region" description="Helical; Name=5" evidence="3">
    <location>
        <begin position="232"/>
        <end position="256"/>
    </location>
</feature>
<feature type="topological domain" description="Cytoplasmic" evidence="3">
    <location>
        <begin position="257"/>
        <end position="280"/>
    </location>
</feature>
<feature type="transmembrane region" description="Helical; Name=6" evidence="3">
    <location>
        <begin position="281"/>
        <end position="307"/>
    </location>
</feature>
<feature type="topological domain" description="Extracellular" evidence="3">
    <location>
        <begin position="308"/>
        <end position="315"/>
    </location>
</feature>
<feature type="transmembrane region" description="Helical; Name=7" evidence="3">
    <location>
        <begin position="316"/>
        <end position="339"/>
    </location>
</feature>
<feature type="topological domain" description="Cytoplasmic" evidence="3">
    <location>
        <begin position="340"/>
        <end position="401"/>
    </location>
</feature>
<feature type="region of interest" description="Disordered" evidence="7">
    <location>
        <begin position="365"/>
        <end position="389"/>
    </location>
</feature>
<feature type="short sequence motif" description="NPxxY; plays a role in stabilizing the activated conformation of the receptor" evidence="3">
    <location>
        <begin position="335"/>
        <end position="339"/>
    </location>
</feature>
<feature type="modified residue" description="Phosphotyrosine" evidence="1">
    <location>
        <position position="169"/>
    </location>
</feature>
<feature type="modified residue" description="Phosphoserine" evidence="3">
    <location>
        <position position="366"/>
    </location>
</feature>
<feature type="modified residue" description="Phosphothreonine" evidence="1">
    <location>
        <position position="373"/>
    </location>
</feature>
<feature type="modified residue" description="Phosphoserine" evidence="1">
    <location>
        <position position="378"/>
    </location>
</feature>
<feature type="modified residue" description="Phosphothreonine" evidence="1">
    <location>
        <position position="397"/>
    </location>
</feature>
<feature type="lipid moiety-binding region" description="S-palmitoyl cysteine" evidence="5">
    <location>
        <position position="354"/>
    </location>
</feature>
<feature type="glycosylation site" description="N-linked (GlcNAc...) asparagine" evidence="5">
    <location>
        <position position="9"/>
    </location>
</feature>
<feature type="glycosylation site" description="N-linked (GlcNAc...) asparagine" evidence="5">
    <location>
        <position position="12"/>
    </location>
</feature>
<feature type="glycosylation site" description="N-linked (GlcNAc...) asparagine" evidence="5">
    <location>
        <position position="34"/>
    </location>
</feature>
<feature type="glycosylation site" description="N-linked (GlcNAc...) asparagine" evidence="5">
    <location>
        <position position="41"/>
    </location>
</feature>
<feature type="glycosylation site" description="N-linked (GlcNAc...) asparagine" evidence="5">
    <location>
        <position position="49"/>
    </location>
</feature>
<feature type="disulfide bond" evidence="6">
    <location>
        <begin position="143"/>
        <end position="220"/>
    </location>
</feature>
<dbReference type="EMBL" id="U89677">
    <property type="protein sequence ID" value="AAB49477.2"/>
    <property type="molecule type" value="mRNA"/>
</dbReference>
<dbReference type="RefSeq" id="NP_776833.1">
    <property type="nucleotide sequence ID" value="NM_174408.2"/>
</dbReference>
<dbReference type="SMR" id="P79350"/>
<dbReference type="FunCoup" id="P79350">
    <property type="interactions" value="356"/>
</dbReference>
<dbReference type="STRING" id="9913.ENSBTAP00000026280"/>
<dbReference type="BindingDB" id="P79350"/>
<dbReference type="ChEMBL" id="CHEMBL3041"/>
<dbReference type="DrugCentral" id="P79350"/>
<dbReference type="GlyCosmos" id="P79350">
    <property type="glycosylation" value="5 sites, No reported glycans"/>
</dbReference>
<dbReference type="GlyGen" id="P79350">
    <property type="glycosylation" value="5 sites"/>
</dbReference>
<dbReference type="PaxDb" id="9913-ENSBTAP00000026280"/>
<dbReference type="GeneID" id="281958"/>
<dbReference type="KEGG" id="bta:281958"/>
<dbReference type="CTD" id="4988"/>
<dbReference type="eggNOG" id="KOG3656">
    <property type="taxonomic scope" value="Eukaryota"/>
</dbReference>
<dbReference type="InParanoid" id="P79350"/>
<dbReference type="OrthoDB" id="6076970at2759"/>
<dbReference type="PRO" id="PR:P79350"/>
<dbReference type="Proteomes" id="UP000009136">
    <property type="component" value="Unplaced"/>
</dbReference>
<dbReference type="GO" id="GO:0030424">
    <property type="term" value="C:axon"/>
    <property type="evidence" value="ECO:0000250"/>
    <property type="project" value="UniProtKB"/>
</dbReference>
<dbReference type="GO" id="GO:0030425">
    <property type="term" value="C:dendrite"/>
    <property type="evidence" value="ECO:0000250"/>
    <property type="project" value="UniProtKB"/>
</dbReference>
<dbReference type="GO" id="GO:0005768">
    <property type="term" value="C:endosome"/>
    <property type="evidence" value="ECO:0000250"/>
    <property type="project" value="UniProtKB"/>
</dbReference>
<dbReference type="GO" id="GO:0043005">
    <property type="term" value="C:neuron projection"/>
    <property type="evidence" value="ECO:0000318"/>
    <property type="project" value="GO_Central"/>
</dbReference>
<dbReference type="GO" id="GO:0043204">
    <property type="term" value="C:perikaryon"/>
    <property type="evidence" value="ECO:0007669"/>
    <property type="project" value="UniProtKB-SubCell"/>
</dbReference>
<dbReference type="GO" id="GO:0005886">
    <property type="term" value="C:plasma membrane"/>
    <property type="evidence" value="ECO:0000250"/>
    <property type="project" value="UniProtKB"/>
</dbReference>
<dbReference type="GO" id="GO:0045202">
    <property type="term" value="C:synapse"/>
    <property type="evidence" value="ECO:0007669"/>
    <property type="project" value="GOC"/>
</dbReference>
<dbReference type="GO" id="GO:0004979">
    <property type="term" value="F:beta-endorphin receptor activity"/>
    <property type="evidence" value="ECO:0000318"/>
    <property type="project" value="GO_Central"/>
</dbReference>
<dbReference type="GO" id="GO:0004930">
    <property type="term" value="F:G protein-coupled receptor activity"/>
    <property type="evidence" value="ECO:0000250"/>
    <property type="project" value="UniProtKB"/>
</dbReference>
<dbReference type="GO" id="GO:0001965">
    <property type="term" value="F:G-protein alpha-subunit binding"/>
    <property type="evidence" value="ECO:0000250"/>
    <property type="project" value="UniProtKB"/>
</dbReference>
<dbReference type="GO" id="GO:0031681">
    <property type="term" value="F:G-protein beta-subunit binding"/>
    <property type="evidence" value="ECO:0000318"/>
    <property type="project" value="GO_Central"/>
</dbReference>
<dbReference type="GO" id="GO:0038047">
    <property type="term" value="F:morphine receptor activity"/>
    <property type="evidence" value="ECO:0000250"/>
    <property type="project" value="UniProtKB"/>
</dbReference>
<dbReference type="GO" id="GO:0042923">
    <property type="term" value="F:neuropeptide binding"/>
    <property type="evidence" value="ECO:0000318"/>
    <property type="project" value="GO_Central"/>
</dbReference>
<dbReference type="GO" id="GO:0005245">
    <property type="term" value="F:voltage-gated calcium channel activity"/>
    <property type="evidence" value="ECO:0000250"/>
    <property type="project" value="UniProtKB"/>
</dbReference>
<dbReference type="GO" id="GO:0007197">
    <property type="term" value="P:adenylate cyclase-inhibiting G protein-coupled acetylcholine receptor signaling pathway"/>
    <property type="evidence" value="ECO:0000250"/>
    <property type="project" value="UniProtKB"/>
</dbReference>
<dbReference type="GO" id="GO:0007193">
    <property type="term" value="P:adenylate cyclase-inhibiting G protein-coupled receptor signaling pathway"/>
    <property type="evidence" value="ECO:0000250"/>
    <property type="project" value="UniProtKB"/>
</dbReference>
<dbReference type="GO" id="GO:0038003">
    <property type="term" value="P:G protein-coupled opioid receptor signaling pathway"/>
    <property type="evidence" value="ECO:0000250"/>
    <property type="project" value="UniProtKB"/>
</dbReference>
<dbReference type="GO" id="GO:0051481">
    <property type="term" value="P:negative regulation of cytosolic calcium ion concentration"/>
    <property type="evidence" value="ECO:0000250"/>
    <property type="project" value="UniProtKB"/>
</dbReference>
<dbReference type="GO" id="GO:0045019">
    <property type="term" value="P:negative regulation of nitric oxide biosynthetic process"/>
    <property type="evidence" value="ECO:0000250"/>
    <property type="project" value="UniProtKB"/>
</dbReference>
<dbReference type="GO" id="GO:0061358">
    <property type="term" value="P:negative regulation of Wnt protein secretion"/>
    <property type="evidence" value="ECO:0000250"/>
    <property type="project" value="UniProtKB"/>
</dbReference>
<dbReference type="GO" id="GO:0007218">
    <property type="term" value="P:neuropeptide signaling pathway"/>
    <property type="evidence" value="ECO:0000318"/>
    <property type="project" value="GO_Central"/>
</dbReference>
<dbReference type="GO" id="GO:0007200">
    <property type="term" value="P:phospholipase C-activating G protein-coupled receptor signaling pathway"/>
    <property type="evidence" value="ECO:0000250"/>
    <property type="project" value="UniProtKB"/>
</dbReference>
<dbReference type="GO" id="GO:0070374">
    <property type="term" value="P:positive regulation of ERK1 and ERK2 cascade"/>
    <property type="evidence" value="ECO:0000250"/>
    <property type="project" value="UniProtKB"/>
</dbReference>
<dbReference type="GO" id="GO:0050769">
    <property type="term" value="P:positive regulation of neurogenesis"/>
    <property type="evidence" value="ECO:0000250"/>
    <property type="project" value="UniProtKB"/>
</dbReference>
<dbReference type="GO" id="GO:2000310">
    <property type="term" value="P:regulation of NMDA receptor activity"/>
    <property type="evidence" value="ECO:0000250"/>
    <property type="project" value="UniProtKB"/>
</dbReference>
<dbReference type="GO" id="GO:0019233">
    <property type="term" value="P:sensory perception of pain"/>
    <property type="evidence" value="ECO:0000250"/>
    <property type="project" value="UniProtKB"/>
</dbReference>
<dbReference type="CDD" id="cd15090">
    <property type="entry name" value="7tmA_Mu_opioid_R"/>
    <property type="match status" value="1"/>
</dbReference>
<dbReference type="FunFam" id="1.20.1070.10:FF:000014">
    <property type="entry name" value="Kappa-type opioid receptor 1"/>
    <property type="match status" value="1"/>
</dbReference>
<dbReference type="Gene3D" id="1.20.1070.10">
    <property type="entry name" value="Rhodopsin 7-helix transmembrane proteins"/>
    <property type="match status" value="1"/>
</dbReference>
<dbReference type="InterPro" id="IPR000276">
    <property type="entry name" value="GPCR_Rhodpsn"/>
</dbReference>
<dbReference type="InterPro" id="IPR017452">
    <property type="entry name" value="GPCR_Rhodpsn_7TM"/>
</dbReference>
<dbReference type="InterPro" id="IPR000105">
    <property type="entry name" value="Mu_opioid_rcpt"/>
</dbReference>
<dbReference type="InterPro" id="IPR001418">
    <property type="entry name" value="Opioid_rcpt"/>
</dbReference>
<dbReference type="PANTHER" id="PTHR24229:SF7">
    <property type="entry name" value="MU-TYPE OPIOID RECEPTOR"/>
    <property type="match status" value="1"/>
</dbReference>
<dbReference type="PANTHER" id="PTHR24229">
    <property type="entry name" value="NEUROPEPTIDES RECEPTOR"/>
    <property type="match status" value="1"/>
</dbReference>
<dbReference type="Pfam" id="PF00001">
    <property type="entry name" value="7tm_1"/>
    <property type="match status" value="1"/>
</dbReference>
<dbReference type="PRINTS" id="PR00237">
    <property type="entry name" value="GPCRRHODOPSN"/>
</dbReference>
<dbReference type="PRINTS" id="PR00537">
    <property type="entry name" value="MUOPIOIDR"/>
</dbReference>
<dbReference type="PRINTS" id="PR00384">
    <property type="entry name" value="OPIOIDR"/>
</dbReference>
<dbReference type="SUPFAM" id="SSF81321">
    <property type="entry name" value="Family A G protein-coupled receptor-like"/>
    <property type="match status" value="1"/>
</dbReference>
<dbReference type="PROSITE" id="PS00237">
    <property type="entry name" value="G_PROTEIN_RECEP_F1_1"/>
    <property type="match status" value="1"/>
</dbReference>
<dbReference type="PROSITE" id="PS50262">
    <property type="entry name" value="G_PROTEIN_RECEP_F1_2"/>
    <property type="match status" value="1"/>
</dbReference>
<comment type="function">
    <text evidence="1 2 3 8">Receptor for endogenous opioids such as beta-endorphin and endomorphin. Receptor for natural and synthetic opioids including morphine, heroin, DAMGO, fentanyl, etorphine, buprenorphin and methadone (PubMed:10581406). Also activated by enkephalin peptides, such as Met-enkephalin or Met-enkephalin-Arg-Phe, with higher affinity for Met-enkephalin-Arg-Phe. Agonist binding to the receptor induces coupling to an inactive GDP-bound heterotrimeric G-protein complex and subsequent exchange of GDP for GTP in the G-protein alpha subunit leading to dissociation of the G-protein complex with the free GTP-bound G-protein alpha and the G-protein beta-gamma dimer activating downstream cellular effectors. The agonist- and cell type-specific activity is predominantly coupled to pertussis toxin-sensitive G(i) and G(o) G alpha proteins, GNAI1, GNAI2, GNAI3 and GNAO1, and to a lesser extent to pertussis toxin-insensitive G alpha proteins GNAZ and GNA15. They mediate an array of downstream cellular responses, including inhibition of adenylate cyclase activity and both N-type and L-type calcium channels, activation of inward rectifying potassium channels, mitogen-activated protein kinase (MAPK), phospholipase C (PLC), phosphoinositide/protein kinase (PKC), phosphoinositide 3-kinase (PI3K) and regulation of NF-kappa-B. Also couples to adenylate cyclase stimulatory G alpha proteins. The selective temporal coupling to G-proteins and subsequent signaling can be regulated by RGSZ proteins, such as RGS9, RGS17 and RGS4. Phosphorylation by members of the GPRK subfamily of Ser/Thr protein kinases and association with beta-arrestins is involved in short-term receptor desensitization. Beta-arrestins associate with the GPRK-phosphorylated receptor and uncouple it from the G-protein thus terminating signal transduction. The phosphorylated receptor is internalized through endocytosis via clathrin-coated pits which involves beta-arrestins. The activation of the ERK pathway occurs either in a G-protein-dependent or a beta-arrestin-dependent manner and is regulated by agonist-specific receptor phosphorylation. Acts as a class A G-protein coupled receptor (GPCR) which dissociates from beta-arrestin at or near the plasma membrane and undergoes rapid recycling. Receptor down-regulation pathways are varying with the agonist and occur dependent or independent of G-protein coupling. Endogenous ligands induce rapid desensitization, endocytosis and recycling. Heterooligomerization with other GPCRs can modulate agonist binding, signaling and trafficking properties. Involved in neurogenesis (By similarity).</text>
</comment>
<comment type="subunit">
    <text evidence="1 2 3">Forms homooligomers and heterooligomers with other GPCRs, such as OPRD1, OPRK1, OPRL1, NPFFR2, ADRA2A, SSTR2, CNR1 and CCR5 (probably in dimeric forms). Interacts with heterotrimeric G proteins; interaction with a heterotrimeric complex containing GNAI1, GNB1 and GNG2 stabilizes the active conformation of the receptor and increases its affinity for endomorphin-2, the synthetic opioid peptide DAMGO and for morphinan agonists (By similarity). Interacts with PPL; the interaction disrupts agonist-mediated G-protein activation. Interacts (via C-terminus) with DNAJB4 (via C-terminus). Interacts with calmodulin; the interaction inhibits the constitutive activity of OPRM1; it abolishes basal and attenuates agonist-stimulated G-protein coupling. Interacts with FLNA, PLD2, RANBP9 and WLS and GPM6A (By similarity). Interacts with RTP4 (By similarity). Interacts with SYP and GNAS (By similarity). Interacts with RGS9, RGS17, RGS20, RGS4, PPP1R9B and HINT1.</text>
</comment>
<comment type="subcellular location">
    <subcellularLocation>
        <location evidence="8">Cell membrane</location>
        <topology evidence="3">Multi-pass membrane protein</topology>
    </subcellularLocation>
    <subcellularLocation>
        <location evidence="4">Cell projection</location>
        <location evidence="4">Axon</location>
    </subcellularLocation>
    <subcellularLocation>
        <location evidence="4">Perikaryon</location>
    </subcellularLocation>
    <subcellularLocation>
        <location evidence="4">Cell projection</location>
        <location evidence="4">Dendrite</location>
    </subcellularLocation>
    <subcellularLocation>
        <location evidence="4">Endosome</location>
    </subcellularLocation>
    <text evidence="4">Is rapidly internalized after agonist binding.</text>
</comment>
<comment type="PTM">
    <text evidence="1">Phosphorylated. Differentially phosphorylated in basal and agonist-induced conditions. Agonist-mediated phosphorylation modulates receptor internalization. Phosphorylated by GRK2 in a agonist-dependent manner. Phosphorylation at Tyr-169 requires receptor activation, is dependent on non-receptor protein tyrosine kinase Src and results in a decrease in agonist efficacy by reducing G-protein coupling efficiency. Phosphorylated on tyrosine residues; the phosphorylation is involved in agonist-induced G-protein-independent receptor down-regulation. Phosphorylation at Ser-378 is involved in G-protein-dependent but not beta-arrestin-dependent activation of the ERK pathway (By similarity).</text>
</comment>
<comment type="PTM">
    <text evidence="3">Ubiquitinated. A basal ubiquitination seems not to be related to degradation. Ubiquitination is increased upon formation of OPRM1:OPRD1 oligomers leading to proteasomal degradation; the ubiquitination is diminished by RTP4.</text>
</comment>
<comment type="similarity">
    <text evidence="6">Belongs to the G-protein coupled receptor 1 family.</text>
</comment>
<proteinExistence type="evidence at transcript level"/>
<reference key="1">
    <citation type="journal article" date="1999" name="Brain Res. Mol. Brain Res.">
        <title>The bovine mu-opioid receptor: cloning of cDNA and pharmacological characterization of the receptor expressed in mammalian cells.</title>
        <authorList>
            <person name="Onoprishvili I."/>
            <person name="Andria M.L."/>
            <person name="Vilim F.S."/>
            <person name="Hiller J.M."/>
            <person name="Simon E.J."/>
        </authorList>
    </citation>
    <scope>NUCLEOTIDE SEQUENCE [MRNA]</scope>
    <scope>FUNCTION</scope>
    <scope>SUBCELLULAR LOCATION</scope>
    <source>
        <tissue>Corpus striatum</tissue>
    </source>
</reference>
<accession>P79350</accession>
<gene>
    <name type="primary">OPRM1</name>
</gene>
<organism>
    <name type="scientific">Bos taurus</name>
    <name type="common">Bovine</name>
    <dbReference type="NCBI Taxonomy" id="9913"/>
    <lineage>
        <taxon>Eukaryota</taxon>
        <taxon>Metazoa</taxon>
        <taxon>Chordata</taxon>
        <taxon>Craniata</taxon>
        <taxon>Vertebrata</taxon>
        <taxon>Euteleostomi</taxon>
        <taxon>Mammalia</taxon>
        <taxon>Eutheria</taxon>
        <taxon>Laurasiatheria</taxon>
        <taxon>Artiodactyla</taxon>
        <taxon>Ruminantia</taxon>
        <taxon>Pecora</taxon>
        <taxon>Bovidae</taxon>
        <taxon>Bovinae</taxon>
        <taxon>Bos</taxon>
    </lineage>
</organism>